<evidence type="ECO:0000250" key="1"/>
<evidence type="ECO:0000255" key="2">
    <source>
        <dbReference type="PROSITE-ProRule" id="PRU00541"/>
    </source>
</evidence>
<evidence type="ECO:0000255" key="3">
    <source>
        <dbReference type="PROSITE-ProRule" id="PRU00542"/>
    </source>
</evidence>
<evidence type="ECO:0000305" key="4"/>
<sequence>MADNFDRTADERIEFTTSKEVTVAPTFDDMHLKENLLRGIYAYGFESPSAIQSRAIVQICKGRDTIAQAQSGTGKTATFAISILQVIDTALRETQALVLSPTRELATQIQNVIMAVGDYMNVQCHACIGGTNVGDDIRKLDHGQHVVSGTPGRVADMIRRRHLRTRHIKMLVLDEADDLLARGFREQIYDVYRYLPPATQVVVLSATLPYDVLSMTTKFMTDPVRILVKRDELTLEGLKQYFIAVEKEEWKFDTLCDLYDTLTITQAVIFCNTRRKVDWLTDKMREANFTVSSMHGEMPQKERDSIMQDFRQGNSRVLISTDVWARGIDVQQVSLVINYDLPSNRENYIHRIGRSGRFGRKGVAINFVTSEDVRILRDIELYYSTQIDEMPMNVADLLG</sequence>
<name>FAL1_COCIM</name>
<accession>Q1DTB3</accession>
<accession>J3K8S1</accession>
<reference key="1">
    <citation type="journal article" date="2009" name="Genome Res.">
        <title>Comparative genomic analyses of the human fungal pathogens Coccidioides and their relatives.</title>
        <authorList>
            <person name="Sharpton T.J."/>
            <person name="Stajich J.E."/>
            <person name="Rounsley S.D."/>
            <person name="Gardner M.J."/>
            <person name="Wortman J.R."/>
            <person name="Jordar V.S."/>
            <person name="Maiti R."/>
            <person name="Kodira C.D."/>
            <person name="Neafsey D.E."/>
            <person name="Zeng Q."/>
            <person name="Hung C.-Y."/>
            <person name="McMahan C."/>
            <person name="Muszewska A."/>
            <person name="Grynberg M."/>
            <person name="Mandel M.A."/>
            <person name="Kellner E.M."/>
            <person name="Barker B.M."/>
            <person name="Galgiani J.N."/>
            <person name="Orbach M.J."/>
            <person name="Kirkland T.N."/>
            <person name="Cole G.T."/>
            <person name="Henn M.R."/>
            <person name="Birren B.W."/>
            <person name="Taylor J.W."/>
        </authorList>
    </citation>
    <scope>NUCLEOTIDE SEQUENCE [LARGE SCALE GENOMIC DNA]</scope>
    <source>
        <strain>RS</strain>
    </source>
</reference>
<reference key="2">
    <citation type="journal article" date="2010" name="Genome Res.">
        <title>Population genomic sequencing of Coccidioides fungi reveals recent hybridization and transposon control.</title>
        <authorList>
            <person name="Neafsey D.E."/>
            <person name="Barker B.M."/>
            <person name="Sharpton T.J."/>
            <person name="Stajich J.E."/>
            <person name="Park D.J."/>
            <person name="Whiston E."/>
            <person name="Hung C.-Y."/>
            <person name="McMahan C."/>
            <person name="White J."/>
            <person name="Sykes S."/>
            <person name="Heiman D."/>
            <person name="Young S."/>
            <person name="Zeng Q."/>
            <person name="Abouelleil A."/>
            <person name="Aftuck L."/>
            <person name="Bessette D."/>
            <person name="Brown A."/>
            <person name="FitzGerald M."/>
            <person name="Lui A."/>
            <person name="Macdonald J.P."/>
            <person name="Priest M."/>
            <person name="Orbach M.J."/>
            <person name="Galgiani J.N."/>
            <person name="Kirkland T.N."/>
            <person name="Cole G.T."/>
            <person name="Birren B.W."/>
            <person name="Henn M.R."/>
            <person name="Taylor J.W."/>
            <person name="Rounsley S.D."/>
        </authorList>
    </citation>
    <scope>GENOME REANNOTATION</scope>
    <source>
        <strain>RS</strain>
    </source>
</reference>
<feature type="chain" id="PRO_0000282446" description="ATP-dependent RNA helicase FAL1">
    <location>
        <begin position="1"/>
        <end position="399"/>
    </location>
</feature>
<feature type="domain" description="Helicase ATP-binding" evidence="2">
    <location>
        <begin position="56"/>
        <end position="226"/>
    </location>
</feature>
<feature type="domain" description="Helicase C-terminal" evidence="3">
    <location>
        <begin position="237"/>
        <end position="398"/>
    </location>
</feature>
<feature type="short sequence motif" description="Q motif">
    <location>
        <begin position="25"/>
        <end position="53"/>
    </location>
</feature>
<feature type="short sequence motif" description="DEAD box">
    <location>
        <begin position="174"/>
        <end position="177"/>
    </location>
</feature>
<feature type="binding site" evidence="2">
    <location>
        <begin position="69"/>
        <end position="76"/>
    </location>
    <ligand>
        <name>ATP</name>
        <dbReference type="ChEBI" id="CHEBI:30616"/>
    </ligand>
</feature>
<organism>
    <name type="scientific">Coccidioides immitis (strain RS)</name>
    <name type="common">Valley fever fungus</name>
    <dbReference type="NCBI Taxonomy" id="246410"/>
    <lineage>
        <taxon>Eukaryota</taxon>
        <taxon>Fungi</taxon>
        <taxon>Dikarya</taxon>
        <taxon>Ascomycota</taxon>
        <taxon>Pezizomycotina</taxon>
        <taxon>Eurotiomycetes</taxon>
        <taxon>Eurotiomycetidae</taxon>
        <taxon>Onygenales</taxon>
        <taxon>Onygenaceae</taxon>
        <taxon>Coccidioides</taxon>
    </lineage>
</organism>
<comment type="function">
    <text evidence="1">ATP-dependent RNA helicase involved in 40S ribosomal subunit biogenesis. Required for the processing and cleavage of 35S pre-rRNA at sites A0, A1, and A2, leading to mature 18S rRNA (By similarity).</text>
</comment>
<comment type="catalytic activity">
    <reaction>
        <text>ATP + H2O = ADP + phosphate + H(+)</text>
        <dbReference type="Rhea" id="RHEA:13065"/>
        <dbReference type="ChEBI" id="CHEBI:15377"/>
        <dbReference type="ChEBI" id="CHEBI:15378"/>
        <dbReference type="ChEBI" id="CHEBI:30616"/>
        <dbReference type="ChEBI" id="CHEBI:43474"/>
        <dbReference type="ChEBI" id="CHEBI:456216"/>
        <dbReference type="EC" id="3.6.4.13"/>
    </reaction>
</comment>
<comment type="subcellular location">
    <subcellularLocation>
        <location evidence="1">Nucleus</location>
        <location evidence="1">Nucleolus</location>
    </subcellularLocation>
</comment>
<comment type="domain">
    <text>The Q motif is unique to and characteristic of the DEAD box family of RNA helicases and controls ATP binding and hydrolysis.</text>
</comment>
<comment type="similarity">
    <text evidence="4">Belongs to the DEAD box helicase family. DDX48/FAL1 subfamily.</text>
</comment>
<dbReference type="EC" id="3.6.4.13"/>
<dbReference type="EMBL" id="GG704912">
    <property type="protein sequence ID" value="EAS30971.3"/>
    <property type="molecule type" value="Genomic_DNA"/>
</dbReference>
<dbReference type="RefSeq" id="XP_001242554.2">
    <property type="nucleotide sequence ID" value="XM_001242553.2"/>
</dbReference>
<dbReference type="SMR" id="Q1DTB3"/>
<dbReference type="FunCoup" id="Q1DTB3">
    <property type="interactions" value="620"/>
</dbReference>
<dbReference type="STRING" id="246410.Q1DTB3"/>
<dbReference type="GeneID" id="4561224"/>
<dbReference type="KEGG" id="cim:CIMG_06450"/>
<dbReference type="VEuPathDB" id="FungiDB:CIMG_06450"/>
<dbReference type="InParanoid" id="Q1DTB3"/>
<dbReference type="OMA" id="TRFHDFK"/>
<dbReference type="OrthoDB" id="10265785at2759"/>
<dbReference type="Proteomes" id="UP000001261">
    <property type="component" value="Unassembled WGS sequence"/>
</dbReference>
<dbReference type="GO" id="GO:0005730">
    <property type="term" value="C:nucleolus"/>
    <property type="evidence" value="ECO:0007669"/>
    <property type="project" value="UniProtKB-SubCell"/>
</dbReference>
<dbReference type="GO" id="GO:0005524">
    <property type="term" value="F:ATP binding"/>
    <property type="evidence" value="ECO:0007669"/>
    <property type="project" value="UniProtKB-KW"/>
</dbReference>
<dbReference type="GO" id="GO:0016887">
    <property type="term" value="F:ATP hydrolysis activity"/>
    <property type="evidence" value="ECO:0007669"/>
    <property type="project" value="RHEA"/>
</dbReference>
<dbReference type="GO" id="GO:0003723">
    <property type="term" value="F:RNA binding"/>
    <property type="evidence" value="ECO:0007669"/>
    <property type="project" value="UniProtKB-KW"/>
</dbReference>
<dbReference type="GO" id="GO:0003724">
    <property type="term" value="F:RNA helicase activity"/>
    <property type="evidence" value="ECO:0007669"/>
    <property type="project" value="UniProtKB-EC"/>
</dbReference>
<dbReference type="GO" id="GO:0006364">
    <property type="term" value="P:rRNA processing"/>
    <property type="evidence" value="ECO:0007669"/>
    <property type="project" value="UniProtKB-KW"/>
</dbReference>
<dbReference type="CDD" id="cd18045">
    <property type="entry name" value="DEADc_EIF4AIII_DDX48"/>
    <property type="match status" value="1"/>
</dbReference>
<dbReference type="CDD" id="cd18787">
    <property type="entry name" value="SF2_C_DEAD"/>
    <property type="match status" value="1"/>
</dbReference>
<dbReference type="FunFam" id="3.40.50.300:FF:000031">
    <property type="entry name" value="Eukaryotic initiation factor 4A-III"/>
    <property type="match status" value="1"/>
</dbReference>
<dbReference type="FunFam" id="3.40.50.300:FF:000498">
    <property type="entry name" value="Eukaryotic initiation factor 4A-III"/>
    <property type="match status" value="1"/>
</dbReference>
<dbReference type="Gene3D" id="3.40.50.300">
    <property type="entry name" value="P-loop containing nucleotide triphosphate hydrolases"/>
    <property type="match status" value="2"/>
</dbReference>
<dbReference type="InterPro" id="IPR011545">
    <property type="entry name" value="DEAD/DEAH_box_helicase_dom"/>
</dbReference>
<dbReference type="InterPro" id="IPR014001">
    <property type="entry name" value="Helicase_ATP-bd"/>
</dbReference>
<dbReference type="InterPro" id="IPR001650">
    <property type="entry name" value="Helicase_C-like"/>
</dbReference>
<dbReference type="InterPro" id="IPR027417">
    <property type="entry name" value="P-loop_NTPase"/>
</dbReference>
<dbReference type="InterPro" id="IPR014014">
    <property type="entry name" value="RNA_helicase_DEAD_Q_motif"/>
</dbReference>
<dbReference type="PANTHER" id="PTHR47958">
    <property type="entry name" value="ATP-DEPENDENT RNA HELICASE DBP3"/>
    <property type="match status" value="1"/>
</dbReference>
<dbReference type="Pfam" id="PF00270">
    <property type="entry name" value="DEAD"/>
    <property type="match status" value="1"/>
</dbReference>
<dbReference type="Pfam" id="PF00271">
    <property type="entry name" value="Helicase_C"/>
    <property type="match status" value="1"/>
</dbReference>
<dbReference type="SMART" id="SM00487">
    <property type="entry name" value="DEXDc"/>
    <property type="match status" value="1"/>
</dbReference>
<dbReference type="SMART" id="SM00490">
    <property type="entry name" value="HELICc"/>
    <property type="match status" value="1"/>
</dbReference>
<dbReference type="SUPFAM" id="SSF52540">
    <property type="entry name" value="P-loop containing nucleoside triphosphate hydrolases"/>
    <property type="match status" value="1"/>
</dbReference>
<dbReference type="PROSITE" id="PS51192">
    <property type="entry name" value="HELICASE_ATP_BIND_1"/>
    <property type="match status" value="1"/>
</dbReference>
<dbReference type="PROSITE" id="PS51194">
    <property type="entry name" value="HELICASE_CTER"/>
    <property type="match status" value="1"/>
</dbReference>
<dbReference type="PROSITE" id="PS51195">
    <property type="entry name" value="Q_MOTIF"/>
    <property type="match status" value="1"/>
</dbReference>
<proteinExistence type="inferred from homology"/>
<keyword id="KW-0067">ATP-binding</keyword>
<keyword id="KW-0347">Helicase</keyword>
<keyword id="KW-0378">Hydrolase</keyword>
<keyword id="KW-0547">Nucleotide-binding</keyword>
<keyword id="KW-0539">Nucleus</keyword>
<keyword id="KW-1185">Reference proteome</keyword>
<keyword id="KW-0690">Ribosome biogenesis</keyword>
<keyword id="KW-0694">RNA-binding</keyword>
<keyword id="KW-0698">rRNA processing</keyword>
<protein>
    <recommendedName>
        <fullName>ATP-dependent RNA helicase FAL1</fullName>
        <ecNumber>3.6.4.13</ecNumber>
    </recommendedName>
</protein>
<gene>
    <name type="primary">FAL1</name>
    <name type="ORF">CIMG_06450</name>
</gene>